<sequence length="264" mass="29108">MAEIDPTQLELERQGILLTTVNRFYNWGRRSSIWPMAFGLACCAIEMMAFGLSRYDVARFGAELFRASPRQADLMIVAGTVTKKMAPQVVRLYNQMAEPRYVISMGACATSGGPFRDGYNVLRGIDLLIPVDVYVPGCPPRPEALLHALMTLQEQIDRQKLGRVRWYGSGDKPQTGDFPVPTFGAKGLEIDGKLVDPVGGLPLLSPYTSPSHGEHRSGQIEHPEVVRQFPIMDPEVELENALKARGIAPEIAADDLKRSVVNDA</sequence>
<gene>
    <name evidence="1" type="primary">nuoB1</name>
    <name type="ordered locus">Chy400_2141</name>
</gene>
<keyword id="KW-0004">4Fe-4S</keyword>
<keyword id="KW-1003">Cell membrane</keyword>
<keyword id="KW-0408">Iron</keyword>
<keyword id="KW-0411">Iron-sulfur</keyword>
<keyword id="KW-0472">Membrane</keyword>
<keyword id="KW-0479">Metal-binding</keyword>
<keyword id="KW-0520">NAD</keyword>
<keyword id="KW-0874">Quinone</keyword>
<keyword id="KW-1278">Translocase</keyword>
<keyword id="KW-0813">Transport</keyword>
<keyword id="KW-0830">Ubiquinone</keyword>
<feature type="chain" id="PRO_0000376175" description="NADH-quinone oxidoreductase subunit B 1">
    <location>
        <begin position="1"/>
        <end position="264"/>
    </location>
</feature>
<feature type="binding site" evidence="1">
    <location>
        <position position="42"/>
    </location>
    <ligand>
        <name>[4Fe-4S] cluster</name>
        <dbReference type="ChEBI" id="CHEBI:49883"/>
    </ligand>
</feature>
<feature type="binding site" evidence="1">
    <location>
        <position position="43"/>
    </location>
    <ligand>
        <name>[4Fe-4S] cluster</name>
        <dbReference type="ChEBI" id="CHEBI:49883"/>
    </ligand>
</feature>
<feature type="binding site" evidence="1">
    <location>
        <position position="108"/>
    </location>
    <ligand>
        <name>[4Fe-4S] cluster</name>
        <dbReference type="ChEBI" id="CHEBI:49883"/>
    </ligand>
</feature>
<feature type="binding site" evidence="1">
    <location>
        <position position="138"/>
    </location>
    <ligand>
        <name>[4Fe-4S] cluster</name>
        <dbReference type="ChEBI" id="CHEBI:49883"/>
    </ligand>
</feature>
<proteinExistence type="inferred from homology"/>
<protein>
    <recommendedName>
        <fullName evidence="1">NADH-quinone oxidoreductase subunit B 1</fullName>
        <ecNumber evidence="1">7.1.1.-</ecNumber>
    </recommendedName>
    <alternativeName>
        <fullName evidence="1">NADH dehydrogenase I subunit B 1</fullName>
    </alternativeName>
    <alternativeName>
        <fullName evidence="1">NDH-1 subunit B 1</fullName>
    </alternativeName>
</protein>
<comment type="function">
    <text evidence="1">NDH-1 shuttles electrons from NADH, via FMN and iron-sulfur (Fe-S) centers, to quinones in the respiratory chain. The immediate electron acceptor for the enzyme in this species is believed to be ubiquinone. Couples the redox reaction to proton translocation (for every two electrons transferred, four hydrogen ions are translocated across the cytoplasmic membrane), and thus conserves the redox energy in a proton gradient.</text>
</comment>
<comment type="catalytic activity">
    <reaction evidence="1">
        <text>a quinone + NADH + 5 H(+)(in) = a quinol + NAD(+) + 4 H(+)(out)</text>
        <dbReference type="Rhea" id="RHEA:57888"/>
        <dbReference type="ChEBI" id="CHEBI:15378"/>
        <dbReference type="ChEBI" id="CHEBI:24646"/>
        <dbReference type="ChEBI" id="CHEBI:57540"/>
        <dbReference type="ChEBI" id="CHEBI:57945"/>
        <dbReference type="ChEBI" id="CHEBI:132124"/>
    </reaction>
</comment>
<comment type="cofactor">
    <cofactor evidence="1">
        <name>[4Fe-4S] cluster</name>
        <dbReference type="ChEBI" id="CHEBI:49883"/>
    </cofactor>
    <text evidence="1">Binds 1 [4Fe-4S] cluster.</text>
</comment>
<comment type="subunit">
    <text evidence="1">NDH-1 is composed of 14 different subunits. Subunits NuoB, C, D, E, F, and G constitute the peripheral sector of the complex.</text>
</comment>
<comment type="subcellular location">
    <subcellularLocation>
        <location evidence="1">Cell membrane</location>
        <topology evidence="1">Peripheral membrane protein</topology>
        <orientation evidence="1">Cytoplasmic side</orientation>
    </subcellularLocation>
</comment>
<comment type="similarity">
    <text evidence="1">Belongs to the complex I 20 kDa subunit family.</text>
</comment>
<organism>
    <name type="scientific">Chloroflexus aurantiacus (strain ATCC 29364 / DSM 637 / Y-400-fl)</name>
    <dbReference type="NCBI Taxonomy" id="480224"/>
    <lineage>
        <taxon>Bacteria</taxon>
        <taxon>Bacillati</taxon>
        <taxon>Chloroflexota</taxon>
        <taxon>Chloroflexia</taxon>
        <taxon>Chloroflexales</taxon>
        <taxon>Chloroflexineae</taxon>
        <taxon>Chloroflexaceae</taxon>
        <taxon>Chloroflexus</taxon>
    </lineage>
</organism>
<accession>B9LGT9</accession>
<reference key="1">
    <citation type="submission" date="2009-01" db="EMBL/GenBank/DDBJ databases">
        <title>Complete sequence of Chloroflexus sp. Y-400-fl.</title>
        <authorList>
            <consortium name="US DOE Joint Genome Institute"/>
            <person name="Lucas S."/>
            <person name="Copeland A."/>
            <person name="Lapidus A."/>
            <person name="Glavina del Rio T."/>
            <person name="Dalin E."/>
            <person name="Tice H."/>
            <person name="Bruce D."/>
            <person name="Goodwin L."/>
            <person name="Pitluck S."/>
            <person name="Sims D."/>
            <person name="Kiss H."/>
            <person name="Brettin T."/>
            <person name="Detter J.C."/>
            <person name="Han C."/>
            <person name="Larimer F."/>
            <person name="Land M."/>
            <person name="Hauser L."/>
            <person name="Kyrpides N."/>
            <person name="Ovchinnikova G."/>
            <person name="Bryant D.A."/>
            <person name="Richardson P."/>
        </authorList>
    </citation>
    <scope>NUCLEOTIDE SEQUENCE [LARGE SCALE GENOMIC DNA]</scope>
    <source>
        <strain>ATCC 29364 / DSM 637 / Y-400-fl</strain>
    </source>
</reference>
<name>NUOB1_CHLSY</name>
<evidence type="ECO:0000255" key="1">
    <source>
        <dbReference type="HAMAP-Rule" id="MF_01356"/>
    </source>
</evidence>
<dbReference type="EC" id="7.1.1.-" evidence="1"/>
<dbReference type="EMBL" id="CP001364">
    <property type="protein sequence ID" value="ACM53541.1"/>
    <property type="molecule type" value="Genomic_DNA"/>
</dbReference>
<dbReference type="SMR" id="B9LGT9"/>
<dbReference type="KEGG" id="chl:Chy400_2141"/>
<dbReference type="HOGENOM" id="CLU_055737_3_0_0"/>
<dbReference type="OrthoDB" id="9786737at2"/>
<dbReference type="GO" id="GO:0005886">
    <property type="term" value="C:plasma membrane"/>
    <property type="evidence" value="ECO:0007669"/>
    <property type="project" value="UniProtKB-SubCell"/>
</dbReference>
<dbReference type="GO" id="GO:0045271">
    <property type="term" value="C:respiratory chain complex I"/>
    <property type="evidence" value="ECO:0007669"/>
    <property type="project" value="TreeGrafter"/>
</dbReference>
<dbReference type="GO" id="GO:0051539">
    <property type="term" value="F:4 iron, 4 sulfur cluster binding"/>
    <property type="evidence" value="ECO:0007669"/>
    <property type="project" value="UniProtKB-KW"/>
</dbReference>
<dbReference type="GO" id="GO:0005506">
    <property type="term" value="F:iron ion binding"/>
    <property type="evidence" value="ECO:0007669"/>
    <property type="project" value="UniProtKB-UniRule"/>
</dbReference>
<dbReference type="GO" id="GO:0008137">
    <property type="term" value="F:NADH dehydrogenase (ubiquinone) activity"/>
    <property type="evidence" value="ECO:0007669"/>
    <property type="project" value="InterPro"/>
</dbReference>
<dbReference type="GO" id="GO:0050136">
    <property type="term" value="F:NADH:ubiquinone reductase (non-electrogenic) activity"/>
    <property type="evidence" value="ECO:0007669"/>
    <property type="project" value="UniProtKB-UniRule"/>
</dbReference>
<dbReference type="GO" id="GO:0048038">
    <property type="term" value="F:quinone binding"/>
    <property type="evidence" value="ECO:0007669"/>
    <property type="project" value="UniProtKB-KW"/>
</dbReference>
<dbReference type="GO" id="GO:0009060">
    <property type="term" value="P:aerobic respiration"/>
    <property type="evidence" value="ECO:0007669"/>
    <property type="project" value="TreeGrafter"/>
</dbReference>
<dbReference type="GO" id="GO:0015990">
    <property type="term" value="P:electron transport coupled proton transport"/>
    <property type="evidence" value="ECO:0007669"/>
    <property type="project" value="TreeGrafter"/>
</dbReference>
<dbReference type="FunFam" id="3.40.50.12280:FF:000004">
    <property type="entry name" value="NADH-quinone oxidoreductase subunit B"/>
    <property type="match status" value="1"/>
</dbReference>
<dbReference type="Gene3D" id="3.40.50.12280">
    <property type="match status" value="1"/>
</dbReference>
<dbReference type="HAMAP" id="MF_01356">
    <property type="entry name" value="NDH1_NuoB"/>
    <property type="match status" value="1"/>
</dbReference>
<dbReference type="InterPro" id="IPR006137">
    <property type="entry name" value="NADH_UbQ_OxRdtase-like_20kDa"/>
</dbReference>
<dbReference type="InterPro" id="IPR006138">
    <property type="entry name" value="NADH_UQ_OxRdtase_20Kd_su"/>
</dbReference>
<dbReference type="NCBIfam" id="TIGR01957">
    <property type="entry name" value="nuoB_fam"/>
    <property type="match status" value="1"/>
</dbReference>
<dbReference type="NCBIfam" id="NF005012">
    <property type="entry name" value="PRK06411.1"/>
    <property type="match status" value="1"/>
</dbReference>
<dbReference type="NCBIfam" id="NF011394">
    <property type="entry name" value="PRK14819.1"/>
    <property type="match status" value="1"/>
</dbReference>
<dbReference type="PANTHER" id="PTHR11995">
    <property type="entry name" value="NADH DEHYDROGENASE"/>
    <property type="match status" value="1"/>
</dbReference>
<dbReference type="PANTHER" id="PTHR11995:SF33">
    <property type="entry name" value="NADH-QUINONE OXIDOREDUCTASE SUBUNIT B 2"/>
    <property type="match status" value="1"/>
</dbReference>
<dbReference type="Pfam" id="PF01058">
    <property type="entry name" value="Oxidored_q6"/>
    <property type="match status" value="1"/>
</dbReference>
<dbReference type="SUPFAM" id="SSF56770">
    <property type="entry name" value="HydA/Nqo6-like"/>
    <property type="match status" value="1"/>
</dbReference>